<dbReference type="EC" id="2.7.1.237" evidence="1"/>
<dbReference type="EMBL" id="AM774415">
    <property type="protein sequence ID" value="CAP14502.1"/>
    <property type="molecule type" value="Genomic_DNA"/>
</dbReference>
<dbReference type="SMR" id="B0R6Y3"/>
<dbReference type="EnsemblBacteria" id="CAP14502">
    <property type="protein sequence ID" value="CAP14502"/>
    <property type="gene ID" value="OE_3871R"/>
</dbReference>
<dbReference type="KEGG" id="hsl:OE_3871R"/>
<dbReference type="HOGENOM" id="CLU_120795_0_0_2"/>
<dbReference type="PhylomeDB" id="B0R6Y3"/>
<dbReference type="UniPathway" id="UPA00241"/>
<dbReference type="Proteomes" id="UP000001321">
    <property type="component" value="Chromosome"/>
</dbReference>
<dbReference type="GO" id="GO:0005525">
    <property type="term" value="F:GTP binding"/>
    <property type="evidence" value="ECO:0007669"/>
    <property type="project" value="UniProtKB-UniRule"/>
</dbReference>
<dbReference type="GO" id="GO:0016301">
    <property type="term" value="F:kinase activity"/>
    <property type="evidence" value="ECO:0007669"/>
    <property type="project" value="UniProtKB-UniRule"/>
</dbReference>
<dbReference type="GO" id="GO:0015937">
    <property type="term" value="P:coenzyme A biosynthetic process"/>
    <property type="evidence" value="ECO:0007669"/>
    <property type="project" value="UniProtKB-UniRule"/>
</dbReference>
<dbReference type="HAMAP" id="MF_00590">
    <property type="entry name" value="Dephospho_CoA_kinase_GTP_dep"/>
    <property type="match status" value="1"/>
</dbReference>
<dbReference type="InterPro" id="IPR007164">
    <property type="entry name" value="GTP-dep_dephospho-CoA_kin"/>
</dbReference>
<dbReference type="PANTHER" id="PTHR40732:SF1">
    <property type="entry name" value="GTP-DEPENDENT DEPHOSPHO-COA KINASE"/>
    <property type="match status" value="1"/>
</dbReference>
<dbReference type="PANTHER" id="PTHR40732">
    <property type="entry name" value="UPF0218 PROTEIN TK1697"/>
    <property type="match status" value="1"/>
</dbReference>
<dbReference type="Pfam" id="PF04019">
    <property type="entry name" value="DUF359"/>
    <property type="match status" value="1"/>
</dbReference>
<dbReference type="PIRSF" id="PIRSF006533">
    <property type="entry name" value="UCP006533"/>
    <property type="match status" value="1"/>
</dbReference>
<reference key="1">
    <citation type="journal article" date="2008" name="Genomics">
        <title>Evolution in the laboratory: the genome of Halobacterium salinarum strain R1 compared to that of strain NRC-1.</title>
        <authorList>
            <person name="Pfeiffer F."/>
            <person name="Schuster S.C."/>
            <person name="Broicher A."/>
            <person name="Falb M."/>
            <person name="Palm P."/>
            <person name="Rodewald K."/>
            <person name="Ruepp A."/>
            <person name="Soppa J."/>
            <person name="Tittor J."/>
            <person name="Oesterhelt D."/>
        </authorList>
    </citation>
    <scope>NUCLEOTIDE SEQUENCE [LARGE SCALE GENOMIC DNA]</scope>
    <source>
        <strain>ATCC 29341 / DSM 671 / R1</strain>
    </source>
</reference>
<protein>
    <recommendedName>
        <fullName evidence="1">GTP-dependent dephospho-CoA kinase</fullName>
        <ecNumber evidence="1">2.7.1.237</ecNumber>
    </recommendedName>
    <alternativeName>
        <fullName evidence="1">Dephospho-coenzyme A kinase</fullName>
        <shortName evidence="1">DPCK</shortName>
    </alternativeName>
</protein>
<comment type="function">
    <text evidence="1">Catalyzes the GTP-dependent phosphorylation of the 3'-hydroxyl group of dephosphocoenzyme A to form coenzyme A (CoA).</text>
</comment>
<comment type="catalytic activity">
    <reaction evidence="1">
        <text>3'-dephospho-CoA + GTP = GDP + CoA + H(+)</text>
        <dbReference type="Rhea" id="RHEA:61156"/>
        <dbReference type="ChEBI" id="CHEBI:15378"/>
        <dbReference type="ChEBI" id="CHEBI:37565"/>
        <dbReference type="ChEBI" id="CHEBI:57287"/>
        <dbReference type="ChEBI" id="CHEBI:57328"/>
        <dbReference type="ChEBI" id="CHEBI:58189"/>
        <dbReference type="EC" id="2.7.1.237"/>
    </reaction>
</comment>
<comment type="pathway">
    <text evidence="1">Cofactor biosynthesis; coenzyme A biosynthesis.</text>
</comment>
<comment type="similarity">
    <text evidence="1">Belongs to the GTP-dependent DPCK family.</text>
</comment>
<feature type="chain" id="PRO_0000380048" description="GTP-dependent dephospho-CoA kinase">
    <location>
        <begin position="1"/>
        <end position="177"/>
    </location>
</feature>
<feature type="binding site" evidence="1">
    <location>
        <position position="45"/>
    </location>
    <ligand>
        <name>GTP</name>
        <dbReference type="ChEBI" id="CHEBI:37565"/>
    </ligand>
</feature>
<feature type="binding site" evidence="1">
    <location>
        <position position="46"/>
    </location>
    <ligand>
        <name>GTP</name>
        <dbReference type="ChEBI" id="CHEBI:37565"/>
    </ligand>
</feature>
<feature type="binding site" evidence="1">
    <location>
        <position position="47"/>
    </location>
    <ligand>
        <name>GTP</name>
        <dbReference type="ChEBI" id="CHEBI:37565"/>
    </ligand>
</feature>
<feature type="binding site" evidence="1">
    <location>
        <position position="64"/>
    </location>
    <ligand>
        <name>GTP</name>
        <dbReference type="ChEBI" id="CHEBI:37565"/>
    </ligand>
</feature>
<feature type="binding site" evidence="1">
    <location>
        <position position="120"/>
    </location>
    <ligand>
        <name>GTP</name>
        <dbReference type="ChEBI" id="CHEBI:37565"/>
    </ligand>
</feature>
<proteinExistence type="inferred from homology"/>
<gene>
    <name type="ordered locus">OE_3871R</name>
</gene>
<accession>B0R6Y3</accession>
<name>DPCKG_HALS3</name>
<evidence type="ECO:0000255" key="1">
    <source>
        <dbReference type="HAMAP-Rule" id="MF_00590"/>
    </source>
</evidence>
<sequence length="177" mass="18213">MSETDAAATLPADARDAFKSPIGPVYTDAAALLADATPPIIAVGDVVTYHLVDAGQTPAVAVVDGRTERDAVRPAVRDAIPEPDLTVASEPGTVSVSLVRALVDAIADADATVVSVDGEEDLAVVPAVLAAPADATVVYGQPGEGMVRVPVTDAGRAEMRERADRLETTAAFWRLVD</sequence>
<keyword id="KW-0173">Coenzyme A biosynthesis</keyword>
<keyword id="KW-0342">GTP-binding</keyword>
<keyword id="KW-0418">Kinase</keyword>
<keyword id="KW-0547">Nucleotide-binding</keyword>
<keyword id="KW-0808">Transferase</keyword>
<organism>
    <name type="scientific">Halobacterium salinarum (strain ATCC 29341 / DSM 671 / R1)</name>
    <dbReference type="NCBI Taxonomy" id="478009"/>
    <lineage>
        <taxon>Archaea</taxon>
        <taxon>Methanobacteriati</taxon>
        <taxon>Methanobacteriota</taxon>
        <taxon>Stenosarchaea group</taxon>
        <taxon>Halobacteria</taxon>
        <taxon>Halobacteriales</taxon>
        <taxon>Halobacteriaceae</taxon>
        <taxon>Halobacterium</taxon>
        <taxon>Halobacterium salinarum NRC-34001</taxon>
    </lineage>
</organism>